<keyword id="KW-0004">4Fe-4S</keyword>
<keyword id="KW-0067">ATP-binding</keyword>
<keyword id="KW-0963">Cytoplasm</keyword>
<keyword id="KW-0408">Iron</keyword>
<keyword id="KW-0411">Iron-sulfur</keyword>
<keyword id="KW-0479">Metal-binding</keyword>
<keyword id="KW-0547">Nucleotide-binding</keyword>
<keyword id="KW-0539">Nucleus</keyword>
<keyword id="KW-1185">Reference proteome</keyword>
<keyword id="KW-0677">Repeat</keyword>
<keyword id="KW-0853">WD repeat</keyword>
<proteinExistence type="inferred from homology"/>
<accession>B6K1G6</accession>
<name>CFD1_SCHJY</name>
<sequence length="612" mass="68179">MENVKHIILVLSGKGGVGKSSVTTQLALSLHETPFYSRKLRIGVLDIDLTGPSIPRMFGMDAETHRIHQSSSGWVPVYTDETKEIGLMSLAFLLSSKNDSVVWRGPKKAAMIRQFVSDVNWGDIDYLLIDTPPGTSDEHLTIVESLLSVTSERPQLIDGAVMVTTPQNVATLDVKKEINFCQNLKIPILGVVENMSGFVCPHCSDCTNIFSKGGGEQLSNTYHLPFLGAVPIDPKFGELIESQSTEHPLIEHYKQLEVAKLFQKITQNMLDSLFHSPSLVLDKVLSGHRGRIWSVAVHPTLPLVATASEDKSVRVFQAQTGELIHVIDGYHTRSVRRVAWRPIDRPVLAIASFDATVSIYEKIDDDWECVAALEGHENEVKCVAWSHDGVYLATCSRDKSVWIWEAMEDDEFDCLAVLQEHTQDVKVVAWHPKDDLLVSGSYDNTIRFWRDDGDDWVQTCELTSHTSTVWALNFSPDGRLLASGDGEGEVFIWEKLVSNEDAARTPSTNILRPSLEEEWCLKAVLPRTFTEPVYTLGWKDDHTLCASGAEGTIGLFAYEDDVSTWHTVSLKEKAHDVYEINTIAWTNDSRLLSGGDDGLCNVWKLSEADQTA</sequence>
<dbReference type="EMBL" id="KE651166">
    <property type="protein sequence ID" value="EEB07787.2"/>
    <property type="molecule type" value="Genomic_DNA"/>
</dbReference>
<dbReference type="RefSeq" id="XP_002174080.2">
    <property type="nucleotide sequence ID" value="XM_002174044.2"/>
</dbReference>
<dbReference type="SMR" id="B6K1G6"/>
<dbReference type="STRING" id="402676.B6K1G6"/>
<dbReference type="EnsemblFungi" id="EEB07787">
    <property type="protein sequence ID" value="EEB07787"/>
    <property type="gene ID" value="SJAG_02895"/>
</dbReference>
<dbReference type="GeneID" id="7048576"/>
<dbReference type="JaponicusDB" id="SJAG_02895"/>
<dbReference type="VEuPathDB" id="FungiDB:SJAG_02895"/>
<dbReference type="eggNOG" id="KOG0645">
    <property type="taxonomic scope" value="Eukaryota"/>
</dbReference>
<dbReference type="eggNOG" id="KOG3022">
    <property type="taxonomic scope" value="Eukaryota"/>
</dbReference>
<dbReference type="HOGENOM" id="CLU_030983_0_0_1"/>
<dbReference type="OMA" id="IDDDWEC"/>
<dbReference type="OrthoDB" id="284782at2759"/>
<dbReference type="Proteomes" id="UP000001744">
    <property type="component" value="Unassembled WGS sequence"/>
</dbReference>
<dbReference type="GO" id="GO:0005829">
    <property type="term" value="C:cytosol"/>
    <property type="evidence" value="ECO:0000318"/>
    <property type="project" value="GO_Central"/>
</dbReference>
<dbReference type="GO" id="GO:0097361">
    <property type="term" value="C:cytosolic [4Fe-4S] assembly targeting complex"/>
    <property type="evidence" value="ECO:0007669"/>
    <property type="project" value="InterPro"/>
</dbReference>
<dbReference type="GO" id="GO:0005634">
    <property type="term" value="C:nucleus"/>
    <property type="evidence" value="ECO:0007669"/>
    <property type="project" value="UniProtKB-SubCell"/>
</dbReference>
<dbReference type="GO" id="GO:0051539">
    <property type="term" value="F:4 iron, 4 sulfur cluster binding"/>
    <property type="evidence" value="ECO:0007669"/>
    <property type="project" value="UniProtKB-UniRule"/>
</dbReference>
<dbReference type="GO" id="GO:0005524">
    <property type="term" value="F:ATP binding"/>
    <property type="evidence" value="ECO:0007669"/>
    <property type="project" value="UniProtKB-KW"/>
</dbReference>
<dbReference type="GO" id="GO:0140663">
    <property type="term" value="F:ATP-dependent FeS chaperone activity"/>
    <property type="evidence" value="ECO:0007669"/>
    <property type="project" value="InterPro"/>
</dbReference>
<dbReference type="GO" id="GO:0051536">
    <property type="term" value="F:iron-sulfur cluster binding"/>
    <property type="evidence" value="ECO:0000318"/>
    <property type="project" value="GO_Central"/>
</dbReference>
<dbReference type="GO" id="GO:0046872">
    <property type="term" value="F:metal ion binding"/>
    <property type="evidence" value="ECO:0007669"/>
    <property type="project" value="UniProtKB-KW"/>
</dbReference>
<dbReference type="GO" id="GO:0016226">
    <property type="term" value="P:iron-sulfur cluster assembly"/>
    <property type="evidence" value="ECO:0000318"/>
    <property type="project" value="GO_Central"/>
</dbReference>
<dbReference type="CDD" id="cd02037">
    <property type="entry name" value="Mrp_NBP35"/>
    <property type="match status" value="1"/>
</dbReference>
<dbReference type="CDD" id="cd00200">
    <property type="entry name" value="WD40"/>
    <property type="match status" value="1"/>
</dbReference>
<dbReference type="FunFam" id="3.40.50.300:FF:001119">
    <property type="entry name" value="Iron-sulfur cluster carrier protein"/>
    <property type="match status" value="1"/>
</dbReference>
<dbReference type="Gene3D" id="3.40.50.300">
    <property type="entry name" value="P-loop containing nucleotide triphosphate hydrolases"/>
    <property type="match status" value="1"/>
</dbReference>
<dbReference type="Gene3D" id="2.130.10.10">
    <property type="entry name" value="YVTN repeat-like/Quinoprotein amine dehydrogenase"/>
    <property type="match status" value="1"/>
</dbReference>
<dbReference type="HAMAP" id="MF_03037">
    <property type="entry name" value="ciao1"/>
    <property type="match status" value="1"/>
</dbReference>
<dbReference type="HAMAP" id="MF_02040">
    <property type="entry name" value="Mrp_NBP35"/>
    <property type="match status" value="1"/>
</dbReference>
<dbReference type="HAMAP" id="MF_03039">
    <property type="entry name" value="NUBP2"/>
    <property type="match status" value="1"/>
</dbReference>
<dbReference type="InterPro" id="IPR028608">
    <property type="entry name" value="CIAO1/Cia1"/>
</dbReference>
<dbReference type="InterPro" id="IPR000808">
    <property type="entry name" value="Mrp-like_CS"/>
</dbReference>
<dbReference type="InterPro" id="IPR019591">
    <property type="entry name" value="Mrp/NBP35_ATP-bd"/>
</dbReference>
<dbReference type="InterPro" id="IPR028600">
    <property type="entry name" value="NUBP2/Cfd1_eukaryotes"/>
</dbReference>
<dbReference type="InterPro" id="IPR027417">
    <property type="entry name" value="P-loop_NTPase"/>
</dbReference>
<dbReference type="InterPro" id="IPR015943">
    <property type="entry name" value="WD40/YVTN_repeat-like_dom_sf"/>
</dbReference>
<dbReference type="InterPro" id="IPR036322">
    <property type="entry name" value="WD40_repeat_dom_sf"/>
</dbReference>
<dbReference type="InterPro" id="IPR001680">
    <property type="entry name" value="WD40_rpt"/>
</dbReference>
<dbReference type="InterPro" id="IPR033756">
    <property type="entry name" value="YlxH/NBP35"/>
</dbReference>
<dbReference type="PANTHER" id="PTHR23264:SF19">
    <property type="entry name" value="CYTOSOLIC FE-S CLUSTER ASSEMBLY FACTOR NUBP2"/>
    <property type="match status" value="1"/>
</dbReference>
<dbReference type="PANTHER" id="PTHR23264">
    <property type="entry name" value="NUCLEOTIDE-BINDING PROTEIN NBP35 YEAST -RELATED"/>
    <property type="match status" value="1"/>
</dbReference>
<dbReference type="Pfam" id="PF10609">
    <property type="entry name" value="ParA"/>
    <property type="match status" value="1"/>
</dbReference>
<dbReference type="Pfam" id="PF00400">
    <property type="entry name" value="WD40"/>
    <property type="match status" value="5"/>
</dbReference>
<dbReference type="SMART" id="SM00320">
    <property type="entry name" value="WD40"/>
    <property type="match status" value="7"/>
</dbReference>
<dbReference type="SUPFAM" id="SSF52540">
    <property type="entry name" value="P-loop containing nucleoside triphosphate hydrolases"/>
    <property type="match status" value="1"/>
</dbReference>
<dbReference type="SUPFAM" id="SSF50978">
    <property type="entry name" value="WD40 repeat-like"/>
    <property type="match status" value="1"/>
</dbReference>
<dbReference type="PROSITE" id="PS01215">
    <property type="entry name" value="MRP"/>
    <property type="match status" value="1"/>
</dbReference>
<dbReference type="PROSITE" id="PS00678">
    <property type="entry name" value="WD_REPEATS_1"/>
    <property type="match status" value="1"/>
</dbReference>
<dbReference type="PROSITE" id="PS50082">
    <property type="entry name" value="WD_REPEATS_2"/>
    <property type="match status" value="4"/>
</dbReference>
<dbReference type="PROSITE" id="PS50294">
    <property type="entry name" value="WD_REPEATS_REGION"/>
    <property type="match status" value="1"/>
</dbReference>
<evidence type="ECO:0000250" key="1"/>
<evidence type="ECO:0000255" key="2"/>
<evidence type="ECO:0000305" key="3"/>
<protein>
    <recommendedName>
        <fullName>Probable cytosolic Fe-S cluster assembly factor SJAG_02895</fullName>
    </recommendedName>
</protein>
<comment type="function">
    <text evidence="1">Fusion protein of two essential components of the cytosolic iron-sulfur (Fe/S) protein assembly (CIA) machinery. Required for maturation of extramitochondrial Fe-S proteins. May form a heterotetramer with nubp35, functioning as a Fe-S scaffold complex, mediating the de novo assembly of an Fe-S cluster and its transfer to target apoproteins (By similarity).</text>
</comment>
<comment type="cofactor">
    <cofactor evidence="1">
        <name>[4Fe-4S] cluster</name>
        <dbReference type="ChEBI" id="CHEBI:49883"/>
    </cofactor>
    <text evidence="1">Binds 4 [4Fe-4S] clusters per heterotetramer. Contains two stable clusters in the N-termini of nbp35 and two labile, bridging clusters between subunits of the nbp35-SJAG_02895 heterotetramer.</text>
</comment>
<comment type="subunit">
    <text evidence="1">Heterotetramer of 2 nbp35 and 2 SJAG_02895 chains.</text>
</comment>
<comment type="subcellular location">
    <subcellularLocation>
        <location>Cytoplasm</location>
    </subcellularLocation>
    <subcellularLocation>
        <location>Nucleus</location>
    </subcellularLocation>
</comment>
<comment type="miscellaneous">
    <text>Results from a fusion of two genes coding for two proteins which both play a role in assembly of Fe-S clusters in other species (CFD1 and CIA1 in S.cerevisiae).</text>
</comment>
<comment type="similarity">
    <text evidence="3">In the N-terminal section; belongs to the Mrp/NBP35 ATP-binding proteins family. NUBP2/CFD1 subfamily.</text>
</comment>
<comment type="similarity">
    <text evidence="3">In the C-terminal section; belongs to the WD repeat CIA1 family.</text>
</comment>
<reference key="1">
    <citation type="journal article" date="2011" name="Science">
        <title>Comparative functional genomics of the fission yeasts.</title>
        <authorList>
            <person name="Rhind N."/>
            <person name="Chen Z."/>
            <person name="Yassour M."/>
            <person name="Thompson D.A."/>
            <person name="Haas B.J."/>
            <person name="Habib N."/>
            <person name="Wapinski I."/>
            <person name="Roy S."/>
            <person name="Lin M.F."/>
            <person name="Heiman D.I."/>
            <person name="Young S.K."/>
            <person name="Furuya K."/>
            <person name="Guo Y."/>
            <person name="Pidoux A."/>
            <person name="Chen H.M."/>
            <person name="Robbertse B."/>
            <person name="Goldberg J.M."/>
            <person name="Aoki K."/>
            <person name="Bayne E.H."/>
            <person name="Berlin A.M."/>
            <person name="Desjardins C.A."/>
            <person name="Dobbs E."/>
            <person name="Dukaj L."/>
            <person name="Fan L."/>
            <person name="FitzGerald M.G."/>
            <person name="French C."/>
            <person name="Gujja S."/>
            <person name="Hansen K."/>
            <person name="Keifenheim D."/>
            <person name="Levin J.Z."/>
            <person name="Mosher R.A."/>
            <person name="Mueller C.A."/>
            <person name="Pfiffner J."/>
            <person name="Priest M."/>
            <person name="Russ C."/>
            <person name="Smialowska A."/>
            <person name="Swoboda P."/>
            <person name="Sykes S.M."/>
            <person name="Vaughn M."/>
            <person name="Vengrova S."/>
            <person name="Yoder R."/>
            <person name="Zeng Q."/>
            <person name="Allshire R."/>
            <person name="Baulcombe D."/>
            <person name="Birren B.W."/>
            <person name="Brown W."/>
            <person name="Ekwall K."/>
            <person name="Kellis M."/>
            <person name="Leatherwood J."/>
            <person name="Levin H."/>
            <person name="Margalit H."/>
            <person name="Martienssen R."/>
            <person name="Nieduszynski C.A."/>
            <person name="Spatafora J.W."/>
            <person name="Friedman N."/>
            <person name="Dalgaard J.Z."/>
            <person name="Baumann P."/>
            <person name="Niki H."/>
            <person name="Regev A."/>
            <person name="Nusbaum C."/>
        </authorList>
    </citation>
    <scope>NUCLEOTIDE SEQUENCE [LARGE SCALE GENOMIC DNA]</scope>
    <source>
        <strain>yFS275 / FY16936</strain>
    </source>
</reference>
<gene>
    <name type="ORF">SJAG_02895</name>
</gene>
<organism>
    <name type="scientific">Schizosaccharomyces japonicus (strain yFS275 / FY16936)</name>
    <name type="common">Fission yeast</name>
    <dbReference type="NCBI Taxonomy" id="402676"/>
    <lineage>
        <taxon>Eukaryota</taxon>
        <taxon>Fungi</taxon>
        <taxon>Dikarya</taxon>
        <taxon>Ascomycota</taxon>
        <taxon>Taphrinomycotina</taxon>
        <taxon>Schizosaccharomycetes</taxon>
        <taxon>Schizosaccharomycetales</taxon>
        <taxon>Schizosaccharomycetaceae</taxon>
        <taxon>Schizosaccharomyces</taxon>
    </lineage>
</organism>
<feature type="chain" id="PRO_0000382921" description="Probable cytosolic Fe-S cluster assembly factor SJAG_02895">
    <location>
        <begin position="1"/>
        <end position="612"/>
    </location>
</feature>
<feature type="repeat" description="WD 1">
    <location>
        <begin position="287"/>
        <end position="326"/>
    </location>
</feature>
<feature type="repeat" description="WD 2">
    <location>
        <begin position="330"/>
        <end position="370"/>
    </location>
</feature>
<feature type="repeat" description="WD 3">
    <location>
        <begin position="375"/>
        <end position="414"/>
    </location>
</feature>
<feature type="repeat" description="WD 4">
    <location>
        <begin position="420"/>
        <end position="459"/>
    </location>
</feature>
<feature type="repeat" description="WD 5">
    <location>
        <begin position="464"/>
        <end position="503"/>
    </location>
</feature>
<feature type="repeat" description="WD 6">
    <location>
        <begin position="528"/>
        <end position="566"/>
    </location>
</feature>
<feature type="repeat" description="WD 7">
    <location>
        <begin position="574"/>
        <end position="612"/>
    </location>
</feature>
<feature type="binding site" evidence="2">
    <location>
        <begin position="13"/>
        <end position="20"/>
    </location>
    <ligand>
        <name>ATP</name>
        <dbReference type="ChEBI" id="CHEBI:30616"/>
    </ligand>
</feature>
<feature type="binding site" evidence="1">
    <location>
        <position position="200"/>
    </location>
    <ligand>
        <name>[4Fe-4S] cluster</name>
        <dbReference type="ChEBI" id="CHEBI:49883"/>
        <note>ligand shared between dimeric partners</note>
    </ligand>
</feature>
<feature type="binding site" evidence="1">
    <location>
        <position position="203"/>
    </location>
    <ligand>
        <name>[4Fe-4S] cluster</name>
        <dbReference type="ChEBI" id="CHEBI:49883"/>
        <note>ligand shared between dimeric partners</note>
    </ligand>
</feature>